<feature type="chain" id="PRO_1000045778" description="Adenosylcobinamide-GDP ribazoletransferase">
    <location>
        <begin position="1"/>
        <end position="251"/>
    </location>
</feature>
<feature type="transmembrane region" description="Helical" evidence="1">
    <location>
        <begin position="35"/>
        <end position="55"/>
    </location>
</feature>
<feature type="transmembrane region" description="Helical" evidence="1">
    <location>
        <begin position="59"/>
        <end position="79"/>
    </location>
</feature>
<feature type="transmembrane region" description="Helical" evidence="1">
    <location>
        <begin position="110"/>
        <end position="130"/>
    </location>
</feature>
<feature type="transmembrane region" description="Helical" evidence="1">
    <location>
        <begin position="134"/>
        <end position="154"/>
    </location>
</feature>
<feature type="transmembrane region" description="Helical" evidence="1">
    <location>
        <begin position="175"/>
        <end position="195"/>
    </location>
</feature>
<feature type="transmembrane region" description="Helical" evidence="1">
    <location>
        <begin position="199"/>
        <end position="219"/>
    </location>
</feature>
<feature type="transmembrane region" description="Helical" evidence="1">
    <location>
        <begin position="229"/>
        <end position="249"/>
    </location>
</feature>
<keyword id="KW-1003">Cell membrane</keyword>
<keyword id="KW-0169">Cobalamin biosynthesis</keyword>
<keyword id="KW-0460">Magnesium</keyword>
<keyword id="KW-0472">Membrane</keyword>
<keyword id="KW-1185">Reference proteome</keyword>
<keyword id="KW-0808">Transferase</keyword>
<keyword id="KW-0812">Transmembrane</keyword>
<keyword id="KW-1133">Transmembrane helix</keyword>
<gene>
    <name evidence="1" type="primary">cobS</name>
    <name type="ordered locus">MAP_1949</name>
</gene>
<reference key="1">
    <citation type="journal article" date="2005" name="Proc. Natl. Acad. Sci. U.S.A.">
        <title>The complete genome sequence of Mycobacterium avium subspecies paratuberculosis.</title>
        <authorList>
            <person name="Li L."/>
            <person name="Bannantine J.P."/>
            <person name="Zhang Q."/>
            <person name="Amonsin A."/>
            <person name="May B.J."/>
            <person name="Alt D."/>
            <person name="Banerji N."/>
            <person name="Kanjilal S."/>
            <person name="Kapur V."/>
        </authorList>
    </citation>
    <scope>NUCLEOTIDE SEQUENCE [LARGE SCALE GENOMIC DNA]</scope>
    <source>
        <strain>ATCC BAA-968 / K-10</strain>
    </source>
</reference>
<accession>Q73YK6</accession>
<proteinExistence type="inferred from homology"/>
<evidence type="ECO:0000255" key="1">
    <source>
        <dbReference type="HAMAP-Rule" id="MF_00719"/>
    </source>
</evidence>
<organism>
    <name type="scientific">Mycolicibacterium paratuberculosis (strain ATCC BAA-968 / K-10)</name>
    <name type="common">Mycobacterium paratuberculosis</name>
    <dbReference type="NCBI Taxonomy" id="262316"/>
    <lineage>
        <taxon>Bacteria</taxon>
        <taxon>Bacillati</taxon>
        <taxon>Actinomycetota</taxon>
        <taxon>Actinomycetes</taxon>
        <taxon>Mycobacteriales</taxon>
        <taxon>Mycobacteriaceae</taxon>
        <taxon>Mycobacterium</taxon>
        <taxon>Mycobacterium avium complex (MAC)</taxon>
    </lineage>
</organism>
<sequence length="251" mass="24306">MMRSLATAFAFGTVLPVPAGGRGPMGRGAMTALPVVGLALGALAAAVAWGGAVVFGRSSPLGGLLAVAALLLITRGLHIDGVADTADGLGCYGPPDRARAVMRDGSTGPFGVAAVVVVVMAQALAFSALAAGRPVPVGVAVAVFAGRVAAVLACRRTVPAAAGSSLGATVAGSQPATVAAAWVAVLLGMSLVAGPRPWHGPVAVLLGLGCGGVLVRHCVRRFGGISGDVLGAAIELTATVSAVALAALVRV</sequence>
<name>COBS_MYCPA</name>
<protein>
    <recommendedName>
        <fullName evidence="1">Adenosylcobinamide-GDP ribazoletransferase</fullName>
        <ecNumber evidence="1">2.7.8.26</ecNumber>
    </recommendedName>
    <alternativeName>
        <fullName evidence="1">Cobalamin synthase</fullName>
    </alternativeName>
    <alternativeName>
        <fullName evidence="1">Cobalamin-5'-phosphate synthase</fullName>
    </alternativeName>
</protein>
<comment type="function">
    <text evidence="1">Joins adenosylcobinamide-GDP and alpha-ribazole to generate adenosylcobalamin (Ado-cobalamin). Also synthesizes adenosylcobalamin 5'-phosphate from adenosylcobinamide-GDP and alpha-ribazole 5'-phosphate.</text>
</comment>
<comment type="catalytic activity">
    <reaction evidence="1">
        <text>alpha-ribazole + adenosylcob(III)inamide-GDP = adenosylcob(III)alamin + GMP + H(+)</text>
        <dbReference type="Rhea" id="RHEA:16049"/>
        <dbReference type="ChEBI" id="CHEBI:10329"/>
        <dbReference type="ChEBI" id="CHEBI:15378"/>
        <dbReference type="ChEBI" id="CHEBI:18408"/>
        <dbReference type="ChEBI" id="CHEBI:58115"/>
        <dbReference type="ChEBI" id="CHEBI:60487"/>
        <dbReference type="EC" id="2.7.8.26"/>
    </reaction>
</comment>
<comment type="catalytic activity">
    <reaction evidence="1">
        <text>alpha-ribazole 5'-phosphate + adenosylcob(III)inamide-GDP = adenosylcob(III)alamin 5'-phosphate + GMP + H(+)</text>
        <dbReference type="Rhea" id="RHEA:23560"/>
        <dbReference type="ChEBI" id="CHEBI:15378"/>
        <dbReference type="ChEBI" id="CHEBI:57918"/>
        <dbReference type="ChEBI" id="CHEBI:58115"/>
        <dbReference type="ChEBI" id="CHEBI:60487"/>
        <dbReference type="ChEBI" id="CHEBI:60493"/>
        <dbReference type="EC" id="2.7.8.26"/>
    </reaction>
</comment>
<comment type="cofactor">
    <cofactor evidence="1">
        <name>Mg(2+)</name>
        <dbReference type="ChEBI" id="CHEBI:18420"/>
    </cofactor>
</comment>
<comment type="pathway">
    <text evidence="1">Cofactor biosynthesis; adenosylcobalamin biosynthesis; adenosylcobalamin from cob(II)yrinate a,c-diamide: step 7/7.</text>
</comment>
<comment type="subcellular location">
    <subcellularLocation>
        <location evidence="1">Cell membrane</location>
        <topology evidence="1">Multi-pass membrane protein</topology>
    </subcellularLocation>
</comment>
<comment type="similarity">
    <text evidence="1">Belongs to the CobS family.</text>
</comment>
<dbReference type="EC" id="2.7.8.26" evidence="1"/>
<dbReference type="EMBL" id="AE016958">
    <property type="protein sequence ID" value="AAS04266.1"/>
    <property type="molecule type" value="Genomic_DNA"/>
</dbReference>
<dbReference type="RefSeq" id="WP_010949424.1">
    <property type="nucleotide sequence ID" value="NC_002944.2"/>
</dbReference>
<dbReference type="STRING" id="262316.MAP_1949"/>
<dbReference type="KEGG" id="mpa:MAP_1949"/>
<dbReference type="PATRIC" id="fig|262316.17.peg.2067"/>
<dbReference type="eggNOG" id="COG0368">
    <property type="taxonomic scope" value="Bacteria"/>
</dbReference>
<dbReference type="HOGENOM" id="CLU_057426_0_2_11"/>
<dbReference type="UniPathway" id="UPA00148">
    <property type="reaction ID" value="UER00238"/>
</dbReference>
<dbReference type="Proteomes" id="UP000000580">
    <property type="component" value="Chromosome"/>
</dbReference>
<dbReference type="GO" id="GO:0005886">
    <property type="term" value="C:plasma membrane"/>
    <property type="evidence" value="ECO:0007669"/>
    <property type="project" value="UniProtKB-SubCell"/>
</dbReference>
<dbReference type="GO" id="GO:0051073">
    <property type="term" value="F:adenosylcobinamide-GDP ribazoletransferase activity"/>
    <property type="evidence" value="ECO:0007669"/>
    <property type="project" value="UniProtKB-UniRule"/>
</dbReference>
<dbReference type="GO" id="GO:0008818">
    <property type="term" value="F:cobalamin 5'-phosphate synthase activity"/>
    <property type="evidence" value="ECO:0007669"/>
    <property type="project" value="UniProtKB-UniRule"/>
</dbReference>
<dbReference type="GO" id="GO:0009236">
    <property type="term" value="P:cobalamin biosynthetic process"/>
    <property type="evidence" value="ECO:0007669"/>
    <property type="project" value="UniProtKB-UniRule"/>
</dbReference>
<dbReference type="HAMAP" id="MF_00719">
    <property type="entry name" value="CobS"/>
    <property type="match status" value="1"/>
</dbReference>
<dbReference type="InterPro" id="IPR003805">
    <property type="entry name" value="CobS"/>
</dbReference>
<dbReference type="NCBIfam" id="NF001279">
    <property type="entry name" value="PRK00235.2-1"/>
    <property type="match status" value="1"/>
</dbReference>
<dbReference type="PANTHER" id="PTHR34148">
    <property type="entry name" value="ADENOSYLCOBINAMIDE-GDP RIBAZOLETRANSFERASE"/>
    <property type="match status" value="1"/>
</dbReference>
<dbReference type="PANTHER" id="PTHR34148:SF1">
    <property type="entry name" value="ADENOSYLCOBINAMIDE-GDP RIBAZOLETRANSFERASE"/>
    <property type="match status" value="1"/>
</dbReference>
<dbReference type="Pfam" id="PF02654">
    <property type="entry name" value="CobS"/>
    <property type="match status" value="1"/>
</dbReference>